<protein>
    <recommendedName>
        <fullName evidence="1">UPF0316 protein BALH_3038</fullName>
    </recommendedName>
</protein>
<sequence length="182" mass="20457">MLQALLIFVLQIIYVPILTIRTILLVKNQTRSAAAVGLLEGAIYIVSLGIVFQDLSNWMNIVAYVIGFSAGLLLGGYIENKLAIGYITYQVSLLDRCNELVDELRHSGFGVTVFEGEGINSIRYRLDIVAKRSREKELLEIINEIAPKAFMSSYEIRSFKGGYLTKAMKKRALMKKKDHHVS</sequence>
<dbReference type="EMBL" id="CP000485">
    <property type="protein sequence ID" value="ABK86299.1"/>
    <property type="molecule type" value="Genomic_DNA"/>
</dbReference>
<dbReference type="RefSeq" id="WP_000938435.1">
    <property type="nucleotide sequence ID" value="NC_008600.1"/>
</dbReference>
<dbReference type="SMR" id="A0RGF6"/>
<dbReference type="KEGG" id="btl:BALH_3038"/>
<dbReference type="HOGENOM" id="CLU_106166_1_1_9"/>
<dbReference type="GO" id="GO:0005886">
    <property type="term" value="C:plasma membrane"/>
    <property type="evidence" value="ECO:0007669"/>
    <property type="project" value="UniProtKB-SubCell"/>
</dbReference>
<dbReference type="CDD" id="cd16381">
    <property type="entry name" value="YitT_C_like_1"/>
    <property type="match status" value="1"/>
</dbReference>
<dbReference type="HAMAP" id="MF_01515">
    <property type="entry name" value="UPF0316"/>
    <property type="match status" value="1"/>
</dbReference>
<dbReference type="InterPro" id="IPR019264">
    <property type="entry name" value="DUF2179"/>
</dbReference>
<dbReference type="InterPro" id="IPR044035">
    <property type="entry name" value="DUF5698"/>
</dbReference>
<dbReference type="InterPro" id="IPR022930">
    <property type="entry name" value="UPF0316"/>
</dbReference>
<dbReference type="NCBIfam" id="NF003193">
    <property type="entry name" value="PRK04164.1-4"/>
    <property type="match status" value="1"/>
</dbReference>
<dbReference type="NCBIfam" id="NF003194">
    <property type="entry name" value="PRK04164.1-5"/>
    <property type="match status" value="1"/>
</dbReference>
<dbReference type="PANTHER" id="PTHR40060">
    <property type="entry name" value="UPF0316 PROTEIN YEBE"/>
    <property type="match status" value="1"/>
</dbReference>
<dbReference type="PANTHER" id="PTHR40060:SF1">
    <property type="entry name" value="UPF0316 PROTEIN YEBE"/>
    <property type="match status" value="1"/>
</dbReference>
<dbReference type="Pfam" id="PF10035">
    <property type="entry name" value="DUF2179"/>
    <property type="match status" value="1"/>
</dbReference>
<dbReference type="Pfam" id="PF18955">
    <property type="entry name" value="DUF5698"/>
    <property type="match status" value="1"/>
</dbReference>
<feature type="chain" id="PRO_0000294263" description="UPF0316 protein BALH_3038">
    <location>
        <begin position="1"/>
        <end position="182"/>
    </location>
</feature>
<feature type="transmembrane region" description="Helical" evidence="1">
    <location>
        <begin position="6"/>
        <end position="26"/>
    </location>
</feature>
<feature type="transmembrane region" description="Helical" evidence="1">
    <location>
        <begin position="32"/>
        <end position="52"/>
    </location>
</feature>
<feature type="transmembrane region" description="Helical" evidence="1">
    <location>
        <begin position="58"/>
        <end position="78"/>
    </location>
</feature>
<evidence type="ECO:0000255" key="1">
    <source>
        <dbReference type="HAMAP-Rule" id="MF_01515"/>
    </source>
</evidence>
<accession>A0RGF6</accession>
<proteinExistence type="inferred from homology"/>
<name>Y3038_BACAH</name>
<organism>
    <name type="scientific">Bacillus thuringiensis (strain Al Hakam)</name>
    <dbReference type="NCBI Taxonomy" id="412694"/>
    <lineage>
        <taxon>Bacteria</taxon>
        <taxon>Bacillati</taxon>
        <taxon>Bacillota</taxon>
        <taxon>Bacilli</taxon>
        <taxon>Bacillales</taxon>
        <taxon>Bacillaceae</taxon>
        <taxon>Bacillus</taxon>
        <taxon>Bacillus cereus group</taxon>
    </lineage>
</organism>
<gene>
    <name type="ordered locus">BALH_3038</name>
</gene>
<reference key="1">
    <citation type="journal article" date="2007" name="J. Bacteriol.">
        <title>The complete genome sequence of Bacillus thuringiensis Al Hakam.</title>
        <authorList>
            <person name="Challacombe J.F."/>
            <person name="Altherr M.R."/>
            <person name="Xie G."/>
            <person name="Bhotika S.S."/>
            <person name="Brown N."/>
            <person name="Bruce D."/>
            <person name="Campbell C.S."/>
            <person name="Campbell M.L."/>
            <person name="Chen J."/>
            <person name="Chertkov O."/>
            <person name="Cleland C."/>
            <person name="Dimitrijevic M."/>
            <person name="Doggett N.A."/>
            <person name="Fawcett J.J."/>
            <person name="Glavina T."/>
            <person name="Goodwin L.A."/>
            <person name="Green L.D."/>
            <person name="Han C.S."/>
            <person name="Hill K.K."/>
            <person name="Hitchcock P."/>
            <person name="Jackson P.J."/>
            <person name="Keim P."/>
            <person name="Kewalramani A.R."/>
            <person name="Longmire J."/>
            <person name="Lucas S."/>
            <person name="Malfatti S."/>
            <person name="Martinez D."/>
            <person name="McMurry K."/>
            <person name="Meincke L.J."/>
            <person name="Misra M."/>
            <person name="Moseman B.L."/>
            <person name="Mundt M."/>
            <person name="Munk A.C."/>
            <person name="Okinaka R.T."/>
            <person name="Parson-Quintana B."/>
            <person name="Reilly L.P."/>
            <person name="Richardson P."/>
            <person name="Robinson D.L."/>
            <person name="Saunders E."/>
            <person name="Tapia R."/>
            <person name="Tesmer J.G."/>
            <person name="Thayer N."/>
            <person name="Thompson L.S."/>
            <person name="Tice H."/>
            <person name="Ticknor L.O."/>
            <person name="Wills P.L."/>
            <person name="Gilna P."/>
            <person name="Brettin T.S."/>
        </authorList>
    </citation>
    <scope>NUCLEOTIDE SEQUENCE [LARGE SCALE GENOMIC DNA]</scope>
    <source>
        <strain>Al Hakam</strain>
    </source>
</reference>
<comment type="subcellular location">
    <subcellularLocation>
        <location evidence="1">Cell membrane</location>
        <topology evidence="1">Multi-pass membrane protein</topology>
    </subcellularLocation>
</comment>
<comment type="similarity">
    <text evidence="1">Belongs to the UPF0316 family.</text>
</comment>
<keyword id="KW-1003">Cell membrane</keyword>
<keyword id="KW-0472">Membrane</keyword>
<keyword id="KW-0812">Transmembrane</keyword>
<keyword id="KW-1133">Transmembrane helix</keyword>